<protein>
    <recommendedName>
        <fullName evidence="1">Polycystin-1-like protein 1</fullName>
        <shortName>Polycystin-1L1</shortName>
    </recommendedName>
    <alternativeName>
        <fullName>Polycystic kidney disease 1-like 1</fullName>
    </alternativeName>
    <alternativeName>
        <fullName evidence="11">Protein abecobe</fullName>
    </alternativeName>
</protein>
<comment type="function">
    <text evidence="1 8">Component of a calcium-permeant ion channel formed by PKD1L2 and PKD1L1 in primary cilia, where it controls cilium calcium concentration, without affecting cytoplasmic calcium concentration, and regulates sonic hedgehog/SHH signaling and GLI2 transcription (By similarity). The PKD1L1:PKD2L1 channel complex is mechanosensitive only at high pressures and is highly temperature sensitive (By similarity). Also involved in left/right axis specification downstream of nodal flow by forming a complex with PKD2 in cilia to facilitate flow detection in left/right patterning (PubMed:21307098).</text>
</comment>
<comment type="subunit">
    <text evidence="1 8">Heterodimer (PubMed:21307098). Interacts with pkd2 to form a calcium channel (PubMed:21307098). Interacts with pkd2l1 to form ciliary calcium channel (By similarity).</text>
</comment>
<comment type="subcellular location">
    <subcellularLocation>
        <location evidence="8">Cell projection</location>
        <location evidence="8">Cilium membrane</location>
        <topology evidence="2">Multi-pass membrane protein</topology>
    </subcellularLocation>
</comment>
<comment type="tissue specificity">
    <text evidence="8">Expressed in Kupffer's vesicle, an organ equivalent to the node.</text>
</comment>
<comment type="disruption phenotype">
    <text evidence="8">Defects in left-right axis patterning, while nodal flow is normal.</text>
</comment>
<comment type="similarity">
    <text evidence="10">Belongs to the polycystin family.</text>
</comment>
<accession>E7FKV8</accession>
<reference key="1">
    <citation type="journal article" date="2011" name="Development">
        <title>Pkd1l1 complexes with Pkd2 on motile cilia and functions to establish the left-right axis.</title>
        <authorList>
            <person name="Kamura K."/>
            <person name="Kobayashi D."/>
            <person name="Uehara Y."/>
            <person name="Koshida S."/>
            <person name="Iijima N."/>
            <person name="Kudo A."/>
            <person name="Yokoyama T."/>
            <person name="Takeda H."/>
        </authorList>
    </citation>
    <scope>NUCLEOTIDE SEQUENCE [MRNA]</scope>
    <scope>FUNCTION</scope>
    <scope>SUBCELLULAR LOCATION</scope>
    <scope>DISRUPTION PHENOTYPE</scope>
    <scope>TISSUE SPECIFICITY</scope>
    <scope>INTERACTION WITH PDK2</scope>
</reference>
<reference key="2">
    <citation type="journal article" date="2007" name="Nature">
        <title>The medaka draft genome and insights into vertebrate genome evolution.</title>
        <authorList>
            <person name="Kasahara M."/>
            <person name="Naruse K."/>
            <person name="Sasaki S."/>
            <person name="Nakatani Y."/>
            <person name="Qu W."/>
            <person name="Ahsan B."/>
            <person name="Yamada T."/>
            <person name="Nagayasu Y."/>
            <person name="Doi K."/>
            <person name="Kasai Y."/>
            <person name="Jindo T."/>
            <person name="Kobayashi D."/>
            <person name="Shimada A."/>
            <person name="Toyoda A."/>
            <person name="Kuroki Y."/>
            <person name="Fujiyama A."/>
            <person name="Sasaki T."/>
            <person name="Shimizu A."/>
            <person name="Asakawa S."/>
            <person name="Shimizu N."/>
            <person name="Hashimoto S."/>
            <person name="Yang J."/>
            <person name="Lee Y."/>
            <person name="Matsushima K."/>
            <person name="Sugano S."/>
            <person name="Sakaizumi M."/>
            <person name="Narita T."/>
            <person name="Ohishi K."/>
            <person name="Haga S."/>
            <person name="Ohta F."/>
            <person name="Nomoto H."/>
            <person name="Nogata K."/>
            <person name="Morishita T."/>
            <person name="Endo T."/>
            <person name="Shin-I T."/>
            <person name="Takeda H."/>
            <person name="Morishita S."/>
            <person name="Kohara Y."/>
        </authorList>
    </citation>
    <scope>NUCLEOTIDE SEQUENCE [LARGE SCALE GENOMIC DNA]</scope>
    <source>
        <strain>Hd-rR</strain>
    </source>
</reference>
<dbReference type="EMBL" id="AB573426">
    <property type="protein sequence ID" value="BAJ65629.1"/>
    <property type="molecule type" value="mRNA"/>
</dbReference>
<dbReference type="EMBL" id="BAAF04039115">
    <property type="status" value="NOT_ANNOTATED_CDS"/>
    <property type="molecule type" value="Genomic_DNA"/>
</dbReference>
<dbReference type="EMBL" id="BAAF04039116">
    <property type="status" value="NOT_ANNOTATED_CDS"/>
    <property type="molecule type" value="Genomic_DNA"/>
</dbReference>
<dbReference type="EMBL" id="BAAF04039117">
    <property type="status" value="NOT_ANNOTATED_CDS"/>
    <property type="molecule type" value="Genomic_DNA"/>
</dbReference>
<dbReference type="STRING" id="8090.ENSORLP00000042607"/>
<dbReference type="GlyCosmos" id="E7FKV8">
    <property type="glycosylation" value="20 sites, No reported glycans"/>
</dbReference>
<dbReference type="InParanoid" id="E7FKV8"/>
<dbReference type="Proteomes" id="UP000001038">
    <property type="component" value="Unplaced"/>
</dbReference>
<dbReference type="Proteomes" id="UP000265180">
    <property type="component" value="Chromosome 9"/>
</dbReference>
<dbReference type="Proteomes" id="UP000265200">
    <property type="component" value="Chromosome 9"/>
</dbReference>
<dbReference type="GO" id="GO:0034704">
    <property type="term" value="C:calcium channel complex"/>
    <property type="evidence" value="ECO:0000250"/>
    <property type="project" value="UniProtKB"/>
</dbReference>
<dbReference type="GO" id="GO:0060170">
    <property type="term" value="C:ciliary membrane"/>
    <property type="evidence" value="ECO:0000250"/>
    <property type="project" value="UniProtKB"/>
</dbReference>
<dbReference type="GO" id="GO:0005929">
    <property type="term" value="C:cilium"/>
    <property type="evidence" value="ECO:0000314"/>
    <property type="project" value="UniProtKB"/>
</dbReference>
<dbReference type="GO" id="GO:0016020">
    <property type="term" value="C:membrane"/>
    <property type="evidence" value="ECO:0000318"/>
    <property type="project" value="GO_Central"/>
</dbReference>
<dbReference type="GO" id="GO:0097730">
    <property type="term" value="C:non-motile cilium"/>
    <property type="evidence" value="ECO:0000250"/>
    <property type="project" value="UniProtKB"/>
</dbReference>
<dbReference type="GO" id="GO:0005262">
    <property type="term" value="F:calcium channel activity"/>
    <property type="evidence" value="ECO:0000318"/>
    <property type="project" value="GO_Central"/>
</dbReference>
<dbReference type="GO" id="GO:0050982">
    <property type="term" value="P:detection of mechanical stimulus"/>
    <property type="evidence" value="ECO:0000315"/>
    <property type="project" value="UniProtKB"/>
</dbReference>
<dbReference type="GO" id="GO:0003127">
    <property type="term" value="P:detection of nodal flow"/>
    <property type="evidence" value="ECO:0000315"/>
    <property type="project" value="UniProtKB"/>
</dbReference>
<dbReference type="GO" id="GO:0070986">
    <property type="term" value="P:left/right axis specification"/>
    <property type="evidence" value="ECO:0000315"/>
    <property type="project" value="UniProtKB"/>
</dbReference>
<dbReference type="CDD" id="cd00146">
    <property type="entry name" value="PKD"/>
    <property type="match status" value="2"/>
</dbReference>
<dbReference type="FunFam" id="2.60.60.20:FF:000017">
    <property type="entry name" value="Polycystin 1 like 1, transient receptor potential channel interacting"/>
    <property type="match status" value="1"/>
</dbReference>
<dbReference type="Gene3D" id="2.60.40.10">
    <property type="entry name" value="Immunoglobulins"/>
    <property type="match status" value="2"/>
</dbReference>
<dbReference type="Gene3D" id="2.60.60.20">
    <property type="entry name" value="PLAT/LH2 domain"/>
    <property type="match status" value="1"/>
</dbReference>
<dbReference type="InterPro" id="IPR057244">
    <property type="entry name" value="GAIN_B"/>
</dbReference>
<dbReference type="InterPro" id="IPR000203">
    <property type="entry name" value="GPS"/>
</dbReference>
<dbReference type="InterPro" id="IPR013783">
    <property type="entry name" value="Ig-like_fold"/>
</dbReference>
<dbReference type="InterPro" id="IPR022409">
    <property type="entry name" value="PKD/Chitinase_dom"/>
</dbReference>
<dbReference type="InterPro" id="IPR013122">
    <property type="entry name" value="PKD1_2_channel"/>
</dbReference>
<dbReference type="InterPro" id="IPR000601">
    <property type="entry name" value="PKD_dom"/>
</dbReference>
<dbReference type="InterPro" id="IPR035986">
    <property type="entry name" value="PKD_dom_sf"/>
</dbReference>
<dbReference type="InterPro" id="IPR001024">
    <property type="entry name" value="PLAT/LH2_dom"/>
</dbReference>
<dbReference type="InterPro" id="IPR036392">
    <property type="entry name" value="PLAT/LH2_dom_sf"/>
</dbReference>
<dbReference type="InterPro" id="IPR046791">
    <property type="entry name" value="Polycystin_dom"/>
</dbReference>
<dbReference type="InterPro" id="IPR014010">
    <property type="entry name" value="REJ_dom"/>
</dbReference>
<dbReference type="PANTHER" id="PTHR46730:SF4">
    <property type="entry name" value="POLYCYSTIC KIDNEY DISEASE PROTEIN 1-LIKE 1"/>
    <property type="match status" value="1"/>
</dbReference>
<dbReference type="PANTHER" id="PTHR46730">
    <property type="entry name" value="POLYCYSTIN-1"/>
    <property type="match status" value="1"/>
</dbReference>
<dbReference type="Pfam" id="PF01825">
    <property type="entry name" value="GPS"/>
    <property type="match status" value="1"/>
</dbReference>
<dbReference type="Pfam" id="PF00801">
    <property type="entry name" value="PKD"/>
    <property type="match status" value="1"/>
</dbReference>
<dbReference type="Pfam" id="PF08016">
    <property type="entry name" value="PKD_channel"/>
    <property type="match status" value="1"/>
</dbReference>
<dbReference type="Pfam" id="PF01477">
    <property type="entry name" value="PLAT"/>
    <property type="match status" value="1"/>
</dbReference>
<dbReference type="Pfam" id="PF20519">
    <property type="entry name" value="Polycystin_dom"/>
    <property type="match status" value="1"/>
</dbReference>
<dbReference type="SMART" id="SM00308">
    <property type="entry name" value="LH2"/>
    <property type="match status" value="1"/>
</dbReference>
<dbReference type="SMART" id="SM00089">
    <property type="entry name" value="PKD"/>
    <property type="match status" value="2"/>
</dbReference>
<dbReference type="SUPFAM" id="SSF49723">
    <property type="entry name" value="Lipase/lipooxygenase domain (PLAT/LH2 domain)"/>
    <property type="match status" value="1"/>
</dbReference>
<dbReference type="SUPFAM" id="SSF49299">
    <property type="entry name" value="PKD domain"/>
    <property type="match status" value="2"/>
</dbReference>
<dbReference type="PROSITE" id="PS50221">
    <property type="entry name" value="GAIN_B"/>
    <property type="match status" value="1"/>
</dbReference>
<dbReference type="PROSITE" id="PS50093">
    <property type="entry name" value="PKD"/>
    <property type="match status" value="2"/>
</dbReference>
<dbReference type="PROSITE" id="PS50095">
    <property type="entry name" value="PLAT"/>
    <property type="match status" value="1"/>
</dbReference>
<dbReference type="PROSITE" id="PS51111">
    <property type="entry name" value="REJ"/>
    <property type="match status" value="1"/>
</dbReference>
<organism>
    <name type="scientific">Oryzias latipes</name>
    <name type="common">Japanese rice fish</name>
    <name type="synonym">Japanese killifish</name>
    <dbReference type="NCBI Taxonomy" id="8090"/>
    <lineage>
        <taxon>Eukaryota</taxon>
        <taxon>Metazoa</taxon>
        <taxon>Chordata</taxon>
        <taxon>Craniata</taxon>
        <taxon>Vertebrata</taxon>
        <taxon>Euteleostomi</taxon>
        <taxon>Actinopterygii</taxon>
        <taxon>Neopterygii</taxon>
        <taxon>Teleostei</taxon>
        <taxon>Neoteleostei</taxon>
        <taxon>Acanthomorphata</taxon>
        <taxon>Ovalentaria</taxon>
        <taxon>Atherinomorphae</taxon>
        <taxon>Beloniformes</taxon>
        <taxon>Adrianichthyidae</taxon>
        <taxon>Oryziinae</taxon>
        <taxon>Oryzias</taxon>
    </lineage>
</organism>
<sequence>MFCLWIFSLAFLHLHLCSVSSSSLEGSGFFVGWINASSLQLFASIGGCDLSPCMDEGQEGMEALYRSEEPFQCSIRASASPGRRQAGRTCVRKVPGNLAVHCHLLSENEGLEEEDLLRITVMTPRGQSSLQVNVSHGGLLTACSDWIWNTSEKHKNNVPASGLHLGISLEVPCCTSCTRFGSDSELVEEQCSALHVSVSDVLVKDYICCLTPRDKDKTLNRTETPCLYSSNSLKDSLVRGRVYQMSFEECFRWHLLVVLLMLEAQYNHSQEVHEDPSSTVKLCDYAVRIHAEKQAYSTNTDIPLLAVVDILDPVEFLWDFGDFTSARANSRTITKRYTNPGIYKLVVVASWGQMSVRSHVLSLVVQRAVKLNRLVHEPSVLQNHTVTVSCRVNVGTNLTFLWNFGDGTVRTGLSTEQHVFTRTGEFRVMVIASNLVSSASLSSYLFVVDRPCQPPPVKNLGPPNIQVRRNEVVFLGVTFESELNCNVSRELHYSWTVYDSAGLTFPLPLTNTHRQSLVLQSYTLPYGIYKAIARVQIVGSVVYSNYSVRLQVVPNSVVVVIQGGTNIYVNTKSSNEVTLDGQASYDPDFPLNPLRYSWTCQPVSTISSSCFSQSIPTSYPVLKFPTSLLKSNFDQFKFTLTVHSGERSASSEIFLTLTSHLAGKLFVHCPECQGDQVSWDQSFSVRAECEDCNVSAEFIQYSWSLFRVNASSKPVAEIPFCYTVDLNAPSAVLENASTPTPAPEMSPSHHFNADWTRFTEDSLASSSPSRIYKSKNRNSELTDSPVSSVTVGFSGSESFNGPPGVDRGSSQFSNFPGQRDMFSEFQSDPESSAEWEFTFPYLESEDLRGQRGDSRVPFPRPEEGDPGISAGRPKETDMESFPSDSDSFSHSSSNKGEGSNLVDPRPSVRLQKPGLLDLHRDSVDKSLFESYTYTGISSCFLSFRSFSLKPSSTYMLELTAKSQRRFYGQTQLFLKVKPVPKGVACQVQPVRGIELYTHFSIFCTSGREDLIYTYSFSVGGRMPRILYQGRDFLYYFSLPSGDPTDDYKVIIYTEIRSSMYGSAKKLCPVTVRVEPSFVRNASSSYSHHEPDLMISDSGLRNVSVLVQLGNIAEIYNYISLLSTILNRLSLDSQANTHALKHLRNVLICIVCKLEYSAQASPADGIFILNELLRVTSQVTVQSARWVTAHVGALSVQFSESNRSILSALVSLLSSSLQVVTSSPETSDSADSPQPLESHLVTGKSRNAFVDDADHCITDLSETTYNKQSEPVPKRLMMRLVNDLLQTTSDLMLRNFDLQKTKELQVQSDLITLCAGFLNKTSTAINCGLITFFLPASLIKMLLLHDGISAKRGFSQREQPSCVQRIGMELLHNPYEWGRYPIQLKGPVADLSLYSCKTRRKIPVHSFLQPITVELRHPQKTSSMSEYTLLRSQINYHNFSITQEHLQQAVQVTVVFTAPPHMAFPVKILFRMFERPTPSMHHLHRLLNWRNNTILLTLPPSYLSAAGVGHLALLDANFGKTPTRRHLAEQISYSLTVESSLCLSWEDQQGSWTQNGCRAQTNDKTSAVNCSCHHLKPLKVLQQQIQSSHFRADLDQFLSVSRDLTVVFVLLLCVSLNIPVLVWCKKTDATSEENNRAHFLPDNSATDQHFYAVTVHTGLCSAARMSARVYVVLHGEDGCSQTKELHVPGCTLFRRNSQNTFILSVADSLGSVQGVHIWHNNSGPSPEWYLKQVQVSELMPGHMEGRSWQFISQCWLAVNKGDGQVERMLRVSTHGLTFSKMLFLKLFEYMPDYHIWMSVYTCPSPHLFTRAQRLCVCLLLFLGYACVNIIITHQRDDQLPFDLGVIDVTSVSIATGLVSVVAVLPVAMVISFLFRVKSGRMTLENYDNVFSKRPSGKTKYQDTDFLSVSTTNLENKDADDKEAVTPQRNKRRKDSVSFESIHELLFQEVLQVSRRRSLFLKKSKGNDSELSPQSSEFCGALKATKNEAQSVRVKRRYRLASLLYHCVAWTLCLLFCLSCLILSAVLGTRLNSGKILHWIHSLFVSLTFCFFVIHPATILVLAAVVSWRFKRSQDFHCFFNKMNSHLEDLKHQDPDQLRPSAFTRTRAPNAEKILEARQRARYLRRVHPPTRAELRKTRTKRKKQAVIHKMLRDLCLCGSMFFLMVCITYGSPVDEHYPLNAAFRRHFIRAHGDDFMSIKKYEDWWKWAQTSLLSSLYYNESENPQMSFISIGAPLVQKTEVCGTFHSQVSMVTPPRPRYHTGSSSKQEVTVGLGYTRSEGASKLRLLHLSGWLSEQTVALKVQFSLYSPAPNLFSSVTLLSEQSSTGLLQSSATVQSVRLYHSPSMLDYTVMVWQLLFLLLSLVNLYHQTSTAAQHGLMGYWKTTSISVEVSLVIVSLVYYVHYVYHPTMVMEVAEQLRRNHREHVDVSTLANSEQFSRTLRGIILFLLAVKCVTVVRLNRILAPSMPLLSLSSLLWPAISGLLLLSIFSCMGRLLYIERTFHSIQTVLWHFWSLRKSRDLISLWRDFYYFGLLYASSAMLTTMVFAVMIRKAKRSPSTKNDPTIREVLGCISQKFTGMKTQIPDCHTQKTYFLEECESLVDELLFKLNALSNSLHHTLPPKLHTYTDKDSPDASSTTELCKERLQDLVRSLSVGQGEAALTFPHDRSLLELQEEEEVKHQEGRCSVGCKESRLPETLWTADYRESMDEHWTEKKSSNGLGGATYSHVVVVEALVHHEQGTKN</sequence>
<name>PK1L1_ORYLA</name>
<evidence type="ECO:0000250" key="1">
    <source>
        <dbReference type="UniProtKB" id="Q8TDX9"/>
    </source>
</evidence>
<evidence type="ECO:0000255" key="2"/>
<evidence type="ECO:0000255" key="3">
    <source>
        <dbReference type="PROSITE-ProRule" id="PRU00098"/>
    </source>
</evidence>
<evidence type="ECO:0000255" key="4">
    <source>
        <dbReference type="PROSITE-ProRule" id="PRU00151"/>
    </source>
</evidence>
<evidence type="ECO:0000255" key="5">
    <source>
        <dbReference type="PROSITE-ProRule" id="PRU00152"/>
    </source>
</evidence>
<evidence type="ECO:0000255" key="6">
    <source>
        <dbReference type="PROSITE-ProRule" id="PRU00511"/>
    </source>
</evidence>
<evidence type="ECO:0000256" key="7">
    <source>
        <dbReference type="SAM" id="MobiDB-lite"/>
    </source>
</evidence>
<evidence type="ECO:0000269" key="8">
    <source>
    </source>
</evidence>
<evidence type="ECO:0000303" key="9">
    <source>
    </source>
</evidence>
<evidence type="ECO:0000305" key="10"/>
<evidence type="ECO:0000305" key="11">
    <source>
    </source>
</evidence>
<feature type="chain" id="PRO_0000425550" description="Polycystin-1-like protein 1">
    <location>
        <begin position="1"/>
        <end position="2742"/>
    </location>
</feature>
<feature type="topological domain" description="Extracellular" evidence="2">
    <location>
        <begin position="1"/>
        <end position="1602"/>
    </location>
</feature>
<feature type="transmembrane region" description="Helical" evidence="2">
    <location>
        <begin position="1603"/>
        <end position="1623"/>
    </location>
</feature>
<feature type="topological domain" description="Cytoplasmic" evidence="2">
    <location>
        <begin position="1624"/>
        <end position="1812"/>
    </location>
</feature>
<feature type="transmembrane region" description="Helical" evidence="2">
    <location>
        <begin position="1813"/>
        <end position="1833"/>
    </location>
</feature>
<feature type="topological domain" description="Extracellular" evidence="2">
    <location>
        <begin position="1834"/>
        <end position="1851"/>
    </location>
</feature>
<feature type="transmembrane region" description="Helical" evidence="2">
    <location>
        <begin position="1852"/>
        <end position="1872"/>
    </location>
</feature>
<feature type="topological domain" description="Cytoplasmic" evidence="2">
    <location>
        <begin position="1873"/>
        <end position="2005"/>
    </location>
</feature>
<feature type="transmembrane region" description="Helical" evidence="2">
    <location>
        <begin position="2006"/>
        <end position="2026"/>
    </location>
</feature>
<feature type="topological domain" description="Extracellular" evidence="2">
    <location>
        <begin position="2027"/>
        <end position="2040"/>
    </location>
</feature>
<feature type="transmembrane region" description="Helical" evidence="2">
    <location>
        <begin position="2041"/>
        <end position="2061"/>
    </location>
</feature>
<feature type="topological domain" description="Cytoplasmic" evidence="2">
    <location>
        <begin position="2062"/>
        <end position="2151"/>
    </location>
</feature>
<feature type="transmembrane region" description="Helical" evidence="2">
    <location>
        <begin position="2152"/>
        <end position="2172"/>
    </location>
</feature>
<feature type="topological domain" description="Extracellular" evidence="2">
    <location>
        <begin position="2173"/>
        <end position="2344"/>
    </location>
</feature>
<feature type="transmembrane region" description="Helical" evidence="2">
    <location>
        <begin position="2345"/>
        <end position="2365"/>
    </location>
</feature>
<feature type="topological domain" description="Cytoplasmic" evidence="2">
    <location>
        <begin position="2366"/>
        <end position="2378"/>
    </location>
</feature>
<feature type="transmembrane region" description="Helical" evidence="2">
    <location>
        <begin position="2379"/>
        <end position="2401"/>
    </location>
</feature>
<feature type="topological domain" description="Extracellular" evidence="2">
    <location>
        <begin position="2402"/>
        <end position="2442"/>
    </location>
</feature>
<feature type="transmembrane region" description="Helical" evidence="2">
    <location>
        <begin position="2443"/>
        <end position="2463"/>
    </location>
</feature>
<feature type="topological domain" description="Cytoplasmic" evidence="2">
    <location>
        <begin position="2464"/>
        <end position="2467"/>
    </location>
</feature>
<feature type="transmembrane region" description="Helical" evidence="2">
    <location>
        <begin position="2468"/>
        <end position="2488"/>
    </location>
</feature>
<feature type="topological domain" description="Extracellular" evidence="2">
    <location>
        <begin position="2489"/>
        <end position="2528"/>
    </location>
</feature>
<feature type="transmembrane region" description="Helical" evidence="2">
    <location>
        <begin position="2529"/>
        <end position="2549"/>
    </location>
</feature>
<feature type="topological domain" description="Cytoplasmic" evidence="2">
    <location>
        <begin position="2550"/>
        <end position="2742"/>
    </location>
</feature>
<feature type="domain" description="PKD 1" evidence="4">
    <location>
        <begin position="286"/>
        <end position="372"/>
    </location>
</feature>
<feature type="domain" description="PKD 2" evidence="4">
    <location>
        <begin position="370"/>
        <end position="454"/>
    </location>
</feature>
<feature type="domain" description="REJ" evidence="6">
    <location>
        <begin position="452"/>
        <end position="1338"/>
    </location>
</feature>
<feature type="domain" description="GAIN-B" evidence="3">
    <location>
        <begin position="1436"/>
        <end position="1587"/>
    </location>
</feature>
<feature type="domain" description="PLAT" evidence="5">
    <location>
        <begin position="1648"/>
        <end position="1769"/>
    </location>
</feature>
<feature type="region of interest" description="Disordered" evidence="7">
    <location>
        <begin position="767"/>
        <end position="829"/>
    </location>
</feature>
<feature type="region of interest" description="Disordered" evidence="7">
    <location>
        <begin position="846"/>
        <end position="908"/>
    </location>
</feature>
<feature type="region of interest" description="GPS" evidence="3">
    <location>
        <begin position="1541"/>
        <end position="1587"/>
    </location>
</feature>
<feature type="compositionally biased region" description="Polar residues" evidence="7">
    <location>
        <begin position="779"/>
        <end position="799"/>
    </location>
</feature>
<feature type="compositionally biased region" description="Low complexity" evidence="7">
    <location>
        <begin position="880"/>
        <end position="893"/>
    </location>
</feature>
<feature type="glycosylation site" description="N-linked (GlcNAc...) asparagine" evidence="2">
    <location>
        <position position="35"/>
    </location>
</feature>
<feature type="glycosylation site" description="N-linked (GlcNAc...) asparagine" evidence="2">
    <location>
        <position position="133"/>
    </location>
</feature>
<feature type="glycosylation site" description="N-linked (GlcNAc...) asparagine" evidence="2">
    <location>
        <position position="149"/>
    </location>
</feature>
<feature type="glycosylation site" description="N-linked (GlcNAc...) asparagine" evidence="2">
    <location>
        <position position="220"/>
    </location>
</feature>
<feature type="glycosylation site" description="N-linked (GlcNAc...) asparagine" evidence="2">
    <location>
        <position position="267"/>
    </location>
</feature>
<feature type="glycosylation site" description="N-linked (GlcNAc...) asparagine" evidence="2">
    <location>
        <position position="383"/>
    </location>
</feature>
<feature type="glycosylation site" description="N-linked (GlcNAc...) asparagine" evidence="2">
    <location>
        <position position="397"/>
    </location>
</feature>
<feature type="glycosylation site" description="N-linked (GlcNAc...) asparagine" evidence="2">
    <location>
        <position position="486"/>
    </location>
</feature>
<feature type="glycosylation site" description="N-linked (GlcNAc...) asparagine" evidence="2">
    <location>
        <position position="545"/>
    </location>
</feature>
<feature type="glycosylation site" description="N-linked (GlcNAc...) asparagine" evidence="2">
    <location>
        <position position="693"/>
    </location>
</feature>
<feature type="glycosylation site" description="N-linked (GlcNAc...) asparagine" evidence="2">
    <location>
        <position position="709"/>
    </location>
</feature>
<feature type="glycosylation site" description="N-linked (GlcNAc...) asparagine" evidence="2">
    <location>
        <position position="735"/>
    </location>
</feature>
<feature type="glycosylation site" description="N-linked (GlcNAc...) asparagine" evidence="2">
    <location>
        <position position="1080"/>
    </location>
</feature>
<feature type="glycosylation site" description="N-linked (GlcNAc...) asparagine" evidence="2">
    <location>
        <position position="1101"/>
    </location>
</feature>
<feature type="glycosylation site" description="N-linked (GlcNAc...) asparagine" evidence="2">
    <location>
        <position position="1201"/>
    </location>
</feature>
<feature type="glycosylation site" description="N-linked (GlcNAc...) asparagine" evidence="2">
    <location>
        <position position="1318"/>
    </location>
</feature>
<feature type="glycosylation site" description="N-linked (GlcNAc...) asparagine" evidence="2">
    <location>
        <position position="1437"/>
    </location>
</feature>
<feature type="glycosylation site" description="N-linked (GlcNAc...) asparagine" evidence="2">
    <location>
        <position position="1490"/>
    </location>
</feature>
<feature type="glycosylation site" description="N-linked (GlcNAc...) asparagine" evidence="2">
    <location>
        <position position="1568"/>
    </location>
</feature>
<feature type="glycosylation site" description="N-linked (GlcNAc...) asparagine" evidence="2">
    <location>
        <position position="2218"/>
    </location>
</feature>
<feature type="disulfide bond" evidence="3">
    <location>
        <begin position="1541"/>
        <end position="1569"/>
    </location>
</feature>
<feature type="disulfide bond" evidence="3">
    <location>
        <begin position="1556"/>
        <end position="1571"/>
    </location>
</feature>
<feature type="sequence conflict" description="In Ref. 1; BAJ65629." evidence="10" ref="1">
    <original>L</original>
    <variation>R</variation>
    <location>
        <position position="847"/>
    </location>
</feature>
<feature type="sequence conflict" description="In Ref. 1; BAJ65629." evidence="10" ref="1">
    <original>L</original>
    <variation>F</variation>
    <location>
        <position position="974"/>
    </location>
</feature>
<feature type="sequence conflict" description="In Ref. 1; BAJ65629." evidence="10" ref="1">
    <original>K</original>
    <variation>T</variation>
    <location>
        <position position="1064"/>
    </location>
</feature>
<feature type="sequence conflict" description="In Ref. 1; BAJ65629." evidence="10" ref="1">
    <original>R</original>
    <variation>G</variation>
    <location>
        <position position="1245"/>
    </location>
</feature>
<feature type="sequence conflict" description="In Ref. 1; BAJ65629." evidence="10" ref="1">
    <original>T</original>
    <variation>K</variation>
    <location>
        <position position="1263"/>
    </location>
</feature>
<feature type="sequence conflict" description="In Ref. 1; BAJ65629." evidence="10" ref="1">
    <original>L</original>
    <variation>S</variation>
    <location>
        <position position="1328"/>
    </location>
</feature>
<feature type="sequence conflict" description="In Ref. 1; BAJ65629." evidence="10" ref="1">
    <original>S</original>
    <variation>P</variation>
    <location>
        <position position="1360"/>
    </location>
</feature>
<feature type="sequence conflict" description="In Ref. 1; BAJ65629." evidence="10" ref="1">
    <original>I</original>
    <variation>L</variation>
    <location>
        <position position="1467"/>
    </location>
</feature>
<feature type="sequence conflict" description="In Ref. 1; BAJ65629." evidence="10" ref="1">
    <original>L</original>
    <variation>F</variation>
    <location>
        <position position="1513"/>
    </location>
</feature>
<feature type="sequence conflict" description="In Ref. 1; BAJ65629." evidence="10" ref="1">
    <original>N</original>
    <variation>Y</variation>
    <location>
        <position position="1616"/>
    </location>
</feature>
<feature type="sequence conflict" description="In Ref. 1; BAJ65629." evidence="10" ref="1">
    <original>C</original>
    <variation>Y</variation>
    <location>
        <position position="1814"/>
    </location>
</feature>
<feature type="sequence conflict" description="In Ref. 1; BAJ65629." evidence="10" ref="1">
    <original>Q</original>
    <variation>K</variation>
    <location>
        <position position="1833"/>
    </location>
</feature>
<feature type="sequence conflict" description="In Ref. 1; BAJ65629." evidence="10" ref="1">
    <original>T</original>
    <variation>Q</variation>
    <location>
        <position position="1924"/>
    </location>
</feature>
<feature type="sequence conflict" description="In Ref. 1; BAJ65629." evidence="10" ref="1">
    <original>F</original>
    <variation>L</variation>
    <location>
        <position position="2014"/>
    </location>
</feature>
<feature type="sequence conflict" description="In Ref. 1; BAJ65629." evidence="10" ref="1">
    <original>H</original>
    <variation>L</variation>
    <location>
        <position position="2036"/>
    </location>
</feature>
<feature type="sequence conflict" description="In Ref. 1; BAJ65629." evidence="10" ref="1">
    <original>F</original>
    <variation>I</variation>
    <location>
        <position position="2182"/>
    </location>
</feature>
<feature type="sequence conflict" description="In Ref. 1; BAJ65629." evidence="10" ref="1">
    <original>A</original>
    <variation>G</variation>
    <location>
        <position position="2189"/>
    </location>
</feature>
<feature type="sequence conflict" description="In Ref. 1; BAJ65629." evidence="10" ref="1">
    <original>D</original>
    <variation>E</variation>
    <location>
        <position position="2192"/>
    </location>
</feature>
<feature type="sequence conflict" description="In Ref. 1; BAJ65629." evidence="10" ref="1">
    <original>M</original>
    <variation>T</variation>
    <location>
        <position position="2195"/>
    </location>
</feature>
<feature type="sequence conflict" description="In Ref. 1; BAJ65629." evidence="10" ref="1">
    <original>R</original>
    <variation>C</variation>
    <location>
        <position position="2257"/>
    </location>
</feature>
<feature type="sequence conflict" description="In Ref. 1; BAJ65629." evidence="10" ref="1">
    <original>Y</original>
    <variation>C</variation>
    <location>
        <position position="2348"/>
    </location>
</feature>
<feature type="sequence conflict" description="In Ref. 1; BAJ65629." evidence="10" ref="1">
    <original>V</original>
    <variation>I</variation>
    <location>
        <position position="2425"/>
    </location>
</feature>
<feature type="sequence conflict" description="In Ref. 1; BAJ65629." evidence="10" ref="1">
    <original>V</original>
    <variation>I</variation>
    <location>
        <position position="2567"/>
    </location>
</feature>
<feature type="sequence conflict" description="In Ref. 1; BAJ65629." evidence="10" ref="1">
    <original>L</original>
    <variation>S</variation>
    <location>
        <position position="2647"/>
    </location>
</feature>
<feature type="sequence conflict" description="In Ref. 1; BAJ65629." evidence="10" ref="1">
    <original>D</original>
    <variation>V</variation>
    <location>
        <position position="2665"/>
    </location>
</feature>
<gene>
    <name evidence="1" type="primary">pkd1l1</name>
    <name evidence="9" type="synonym">abc</name>
</gene>
<proteinExistence type="evidence at protein level"/>
<keyword id="KW-0106">Calcium</keyword>
<keyword id="KW-0107">Calcium channel</keyword>
<keyword id="KW-0109">Calcium transport</keyword>
<keyword id="KW-1003">Cell membrane</keyword>
<keyword id="KW-0966">Cell projection</keyword>
<keyword id="KW-0969">Cilium</keyword>
<keyword id="KW-1015">Disulfide bond</keyword>
<keyword id="KW-0325">Glycoprotein</keyword>
<keyword id="KW-0407">Ion channel</keyword>
<keyword id="KW-0406">Ion transport</keyword>
<keyword id="KW-0472">Membrane</keyword>
<keyword id="KW-1185">Reference proteome</keyword>
<keyword id="KW-0677">Repeat</keyword>
<keyword id="KW-0812">Transmembrane</keyword>
<keyword id="KW-1133">Transmembrane helix</keyword>
<keyword id="KW-0813">Transport</keyword>